<name>PNP_GEOUR</name>
<gene>
    <name evidence="1" type="primary">pnp</name>
    <name type="ordered locus">Gura_1906</name>
</gene>
<accession>A5GF91</accession>
<organism>
    <name type="scientific">Geotalea uraniireducens (strain Rf4)</name>
    <name type="common">Geobacter uraniireducens</name>
    <dbReference type="NCBI Taxonomy" id="351605"/>
    <lineage>
        <taxon>Bacteria</taxon>
        <taxon>Pseudomonadati</taxon>
        <taxon>Thermodesulfobacteriota</taxon>
        <taxon>Desulfuromonadia</taxon>
        <taxon>Geobacterales</taxon>
        <taxon>Geobacteraceae</taxon>
        <taxon>Geotalea</taxon>
    </lineage>
</organism>
<evidence type="ECO:0000255" key="1">
    <source>
        <dbReference type="HAMAP-Rule" id="MF_01595"/>
    </source>
</evidence>
<dbReference type="EC" id="2.7.7.8" evidence="1"/>
<dbReference type="EMBL" id="CP000698">
    <property type="protein sequence ID" value="ABQ26096.1"/>
    <property type="molecule type" value="Genomic_DNA"/>
</dbReference>
<dbReference type="RefSeq" id="WP_011938799.1">
    <property type="nucleotide sequence ID" value="NC_009483.1"/>
</dbReference>
<dbReference type="SMR" id="A5GF91"/>
<dbReference type="STRING" id="351605.Gura_1906"/>
<dbReference type="KEGG" id="gur:Gura_1906"/>
<dbReference type="HOGENOM" id="CLU_004217_2_2_7"/>
<dbReference type="OrthoDB" id="9804305at2"/>
<dbReference type="Proteomes" id="UP000006695">
    <property type="component" value="Chromosome"/>
</dbReference>
<dbReference type="GO" id="GO:0005829">
    <property type="term" value="C:cytosol"/>
    <property type="evidence" value="ECO:0007669"/>
    <property type="project" value="TreeGrafter"/>
</dbReference>
<dbReference type="GO" id="GO:0000175">
    <property type="term" value="F:3'-5'-RNA exonuclease activity"/>
    <property type="evidence" value="ECO:0007669"/>
    <property type="project" value="TreeGrafter"/>
</dbReference>
<dbReference type="GO" id="GO:0000287">
    <property type="term" value="F:magnesium ion binding"/>
    <property type="evidence" value="ECO:0007669"/>
    <property type="project" value="UniProtKB-UniRule"/>
</dbReference>
<dbReference type="GO" id="GO:0004654">
    <property type="term" value="F:polyribonucleotide nucleotidyltransferase activity"/>
    <property type="evidence" value="ECO:0007669"/>
    <property type="project" value="UniProtKB-UniRule"/>
</dbReference>
<dbReference type="GO" id="GO:0003723">
    <property type="term" value="F:RNA binding"/>
    <property type="evidence" value="ECO:0007669"/>
    <property type="project" value="UniProtKB-UniRule"/>
</dbReference>
<dbReference type="GO" id="GO:0006402">
    <property type="term" value="P:mRNA catabolic process"/>
    <property type="evidence" value="ECO:0007669"/>
    <property type="project" value="UniProtKB-UniRule"/>
</dbReference>
<dbReference type="GO" id="GO:0006396">
    <property type="term" value="P:RNA processing"/>
    <property type="evidence" value="ECO:0007669"/>
    <property type="project" value="InterPro"/>
</dbReference>
<dbReference type="CDD" id="cd02393">
    <property type="entry name" value="KH-I_PNPase"/>
    <property type="match status" value="1"/>
</dbReference>
<dbReference type="CDD" id="cd11363">
    <property type="entry name" value="RNase_PH_PNPase_1"/>
    <property type="match status" value="1"/>
</dbReference>
<dbReference type="CDD" id="cd11364">
    <property type="entry name" value="RNase_PH_PNPase_2"/>
    <property type="match status" value="1"/>
</dbReference>
<dbReference type="CDD" id="cd04472">
    <property type="entry name" value="S1_PNPase"/>
    <property type="match status" value="1"/>
</dbReference>
<dbReference type="FunFam" id="2.40.50.140:FF:000023">
    <property type="entry name" value="Polyribonucleotide nucleotidyltransferase"/>
    <property type="match status" value="1"/>
</dbReference>
<dbReference type="FunFam" id="3.30.1370.10:FF:000001">
    <property type="entry name" value="Polyribonucleotide nucleotidyltransferase"/>
    <property type="match status" value="1"/>
</dbReference>
<dbReference type="FunFam" id="3.30.230.70:FF:000001">
    <property type="entry name" value="Polyribonucleotide nucleotidyltransferase"/>
    <property type="match status" value="1"/>
</dbReference>
<dbReference type="FunFam" id="3.30.230.70:FF:000002">
    <property type="entry name" value="Polyribonucleotide nucleotidyltransferase"/>
    <property type="match status" value="1"/>
</dbReference>
<dbReference type="Gene3D" id="3.30.230.70">
    <property type="entry name" value="GHMP Kinase, N-terminal domain"/>
    <property type="match status" value="2"/>
</dbReference>
<dbReference type="Gene3D" id="3.30.1370.10">
    <property type="entry name" value="K Homology domain, type 1"/>
    <property type="match status" value="1"/>
</dbReference>
<dbReference type="Gene3D" id="2.40.50.140">
    <property type="entry name" value="Nucleic acid-binding proteins"/>
    <property type="match status" value="1"/>
</dbReference>
<dbReference type="HAMAP" id="MF_01595">
    <property type="entry name" value="PNPase"/>
    <property type="match status" value="1"/>
</dbReference>
<dbReference type="InterPro" id="IPR001247">
    <property type="entry name" value="ExoRNase_PH_dom1"/>
</dbReference>
<dbReference type="InterPro" id="IPR015847">
    <property type="entry name" value="ExoRNase_PH_dom2"/>
</dbReference>
<dbReference type="InterPro" id="IPR036345">
    <property type="entry name" value="ExoRNase_PH_dom2_sf"/>
</dbReference>
<dbReference type="InterPro" id="IPR004087">
    <property type="entry name" value="KH_dom"/>
</dbReference>
<dbReference type="InterPro" id="IPR004088">
    <property type="entry name" value="KH_dom_type_1"/>
</dbReference>
<dbReference type="InterPro" id="IPR036612">
    <property type="entry name" value="KH_dom_type_1_sf"/>
</dbReference>
<dbReference type="InterPro" id="IPR012340">
    <property type="entry name" value="NA-bd_OB-fold"/>
</dbReference>
<dbReference type="InterPro" id="IPR012162">
    <property type="entry name" value="PNPase"/>
</dbReference>
<dbReference type="InterPro" id="IPR027408">
    <property type="entry name" value="PNPase/RNase_PH_dom_sf"/>
</dbReference>
<dbReference type="InterPro" id="IPR015848">
    <property type="entry name" value="PNPase_PH_RNA-bd_bac/org-type"/>
</dbReference>
<dbReference type="InterPro" id="IPR036456">
    <property type="entry name" value="PNPase_PH_RNA-bd_sf"/>
</dbReference>
<dbReference type="InterPro" id="IPR020568">
    <property type="entry name" value="Ribosomal_Su5_D2-typ_SF"/>
</dbReference>
<dbReference type="InterPro" id="IPR003029">
    <property type="entry name" value="S1_domain"/>
</dbReference>
<dbReference type="NCBIfam" id="TIGR03591">
    <property type="entry name" value="polynuc_phos"/>
    <property type="match status" value="1"/>
</dbReference>
<dbReference type="NCBIfam" id="NF008805">
    <property type="entry name" value="PRK11824.1"/>
    <property type="match status" value="1"/>
</dbReference>
<dbReference type="PANTHER" id="PTHR11252">
    <property type="entry name" value="POLYRIBONUCLEOTIDE NUCLEOTIDYLTRANSFERASE"/>
    <property type="match status" value="1"/>
</dbReference>
<dbReference type="PANTHER" id="PTHR11252:SF0">
    <property type="entry name" value="POLYRIBONUCLEOTIDE NUCLEOTIDYLTRANSFERASE 1, MITOCHONDRIAL"/>
    <property type="match status" value="1"/>
</dbReference>
<dbReference type="Pfam" id="PF00013">
    <property type="entry name" value="KH_1"/>
    <property type="match status" value="1"/>
</dbReference>
<dbReference type="Pfam" id="PF03726">
    <property type="entry name" value="PNPase"/>
    <property type="match status" value="1"/>
</dbReference>
<dbReference type="Pfam" id="PF01138">
    <property type="entry name" value="RNase_PH"/>
    <property type="match status" value="2"/>
</dbReference>
<dbReference type="Pfam" id="PF03725">
    <property type="entry name" value="RNase_PH_C"/>
    <property type="match status" value="2"/>
</dbReference>
<dbReference type="Pfam" id="PF00575">
    <property type="entry name" value="S1"/>
    <property type="match status" value="1"/>
</dbReference>
<dbReference type="PIRSF" id="PIRSF005499">
    <property type="entry name" value="PNPase"/>
    <property type="match status" value="1"/>
</dbReference>
<dbReference type="SMART" id="SM00322">
    <property type="entry name" value="KH"/>
    <property type="match status" value="1"/>
</dbReference>
<dbReference type="SMART" id="SM00316">
    <property type="entry name" value="S1"/>
    <property type="match status" value="1"/>
</dbReference>
<dbReference type="SUPFAM" id="SSF54791">
    <property type="entry name" value="Eukaryotic type KH-domain (KH-domain type I)"/>
    <property type="match status" value="1"/>
</dbReference>
<dbReference type="SUPFAM" id="SSF50249">
    <property type="entry name" value="Nucleic acid-binding proteins"/>
    <property type="match status" value="1"/>
</dbReference>
<dbReference type="SUPFAM" id="SSF46915">
    <property type="entry name" value="Polynucleotide phosphorylase/guanosine pentaphosphate synthase (PNPase/GPSI), domain 3"/>
    <property type="match status" value="1"/>
</dbReference>
<dbReference type="SUPFAM" id="SSF55666">
    <property type="entry name" value="Ribonuclease PH domain 2-like"/>
    <property type="match status" value="2"/>
</dbReference>
<dbReference type="SUPFAM" id="SSF54211">
    <property type="entry name" value="Ribosomal protein S5 domain 2-like"/>
    <property type="match status" value="2"/>
</dbReference>
<dbReference type="PROSITE" id="PS50084">
    <property type="entry name" value="KH_TYPE_1"/>
    <property type="match status" value="1"/>
</dbReference>
<dbReference type="PROSITE" id="PS50126">
    <property type="entry name" value="S1"/>
    <property type="match status" value="1"/>
</dbReference>
<reference key="1">
    <citation type="submission" date="2007-05" db="EMBL/GenBank/DDBJ databases">
        <title>Complete sequence of Geobacter uraniireducens Rf4.</title>
        <authorList>
            <consortium name="US DOE Joint Genome Institute"/>
            <person name="Copeland A."/>
            <person name="Lucas S."/>
            <person name="Lapidus A."/>
            <person name="Barry K."/>
            <person name="Detter J.C."/>
            <person name="Glavina del Rio T."/>
            <person name="Hammon N."/>
            <person name="Israni S."/>
            <person name="Dalin E."/>
            <person name="Tice H."/>
            <person name="Pitluck S."/>
            <person name="Chertkov O."/>
            <person name="Brettin T."/>
            <person name="Bruce D."/>
            <person name="Han C."/>
            <person name="Schmutz J."/>
            <person name="Larimer F."/>
            <person name="Land M."/>
            <person name="Hauser L."/>
            <person name="Kyrpides N."/>
            <person name="Mikhailova N."/>
            <person name="Shelobolina E."/>
            <person name="Aklujkar M."/>
            <person name="Lovley D."/>
            <person name="Richardson P."/>
        </authorList>
    </citation>
    <scope>NUCLEOTIDE SEQUENCE [LARGE SCALE GENOMIC DNA]</scope>
    <source>
        <strain>ATCC BAA-1134 / JCM 13001 / Rf4</strain>
    </source>
</reference>
<comment type="function">
    <text evidence="1">Involved in mRNA degradation. Catalyzes the phosphorolysis of single-stranded polyribonucleotides processively in the 3'- to 5'-direction.</text>
</comment>
<comment type="catalytic activity">
    <reaction evidence="1">
        <text>RNA(n+1) + phosphate = RNA(n) + a ribonucleoside 5'-diphosphate</text>
        <dbReference type="Rhea" id="RHEA:22096"/>
        <dbReference type="Rhea" id="RHEA-COMP:14527"/>
        <dbReference type="Rhea" id="RHEA-COMP:17342"/>
        <dbReference type="ChEBI" id="CHEBI:43474"/>
        <dbReference type="ChEBI" id="CHEBI:57930"/>
        <dbReference type="ChEBI" id="CHEBI:140395"/>
        <dbReference type="EC" id="2.7.7.8"/>
    </reaction>
</comment>
<comment type="cofactor">
    <cofactor evidence="1">
        <name>Mg(2+)</name>
        <dbReference type="ChEBI" id="CHEBI:18420"/>
    </cofactor>
</comment>
<comment type="subcellular location">
    <subcellularLocation>
        <location evidence="1">Cytoplasm</location>
    </subcellularLocation>
</comment>
<comment type="similarity">
    <text evidence="1">Belongs to the polyribonucleotide nucleotidyltransferase family.</text>
</comment>
<sequence length="696" mass="75018">METKVQVEFGGRTITIETGKMAKQASGAVVVSSGDTMVLVTAVATKTAKEGQDFFPLTVNYQEKAYAGGKIPGGFFKREARPSDNETLTCRLIDRPIRPLFPENFLNDTQIMATVVSADKDNDPGILSMVGASAALMVSDIPFQGPIAGVKVGRVDGRFIANPTADEMEKSDIEIVVAASKDAVIMVEGSAAEVSEEDMLEAIFFGHAAIQPLLAAQEELCSKAGVAKREVPPPAVNEELKANVKDIAYARMKEAVRIKSKVERHNSIDAISAETLAALATEFEGCDKQIKAFLGDFEYELVREHILKDGERIDGRDTKTIRQITTEVSLLPRAHGSALFTRGETQSLVAATLGTSIDEQRIDSLFGESKKRFLLHYNFPPFSVGETSFRLGPGRREIGHGMLAERALARVLPKHDDFPYTIRIVSDILESNGSSSMASVCGGSMSMMDAGIPIKAPVAGIAMGLIKEGEDFAILSDILGDEDHLGDMDFKVAGTAEGVTALQMDIKIGGVTREIMGIALKQALEGRLHILGRMADTIKTSKSDLSTYAPRITTIYVKTDKIRDVIGSGGKNIRGITEATGVTIDIDDTGKINIASTDKAACDLAIKMIRDLTAEAEEGKLYMGLVKKVMEFGAFVEIFPGTDGLVHISELDTERVKNVTDILKEGDKVLVKCIGIDKQGKIKLSRKEALGATLPE</sequence>
<keyword id="KW-0963">Cytoplasm</keyword>
<keyword id="KW-0460">Magnesium</keyword>
<keyword id="KW-0479">Metal-binding</keyword>
<keyword id="KW-0548">Nucleotidyltransferase</keyword>
<keyword id="KW-1185">Reference proteome</keyword>
<keyword id="KW-0694">RNA-binding</keyword>
<keyword id="KW-0808">Transferase</keyword>
<feature type="chain" id="PRO_0000329663" description="Polyribonucleotide nucleotidyltransferase">
    <location>
        <begin position="1"/>
        <end position="696"/>
    </location>
</feature>
<feature type="domain" description="KH" evidence="1">
    <location>
        <begin position="550"/>
        <end position="609"/>
    </location>
</feature>
<feature type="domain" description="S1 motif" evidence="1">
    <location>
        <begin position="619"/>
        <end position="687"/>
    </location>
</feature>
<feature type="binding site" evidence="1">
    <location>
        <position position="483"/>
    </location>
    <ligand>
        <name>Mg(2+)</name>
        <dbReference type="ChEBI" id="CHEBI:18420"/>
    </ligand>
</feature>
<feature type="binding site" evidence="1">
    <location>
        <position position="489"/>
    </location>
    <ligand>
        <name>Mg(2+)</name>
        <dbReference type="ChEBI" id="CHEBI:18420"/>
    </ligand>
</feature>
<protein>
    <recommendedName>
        <fullName evidence="1">Polyribonucleotide nucleotidyltransferase</fullName>
        <ecNumber evidence="1">2.7.7.8</ecNumber>
    </recommendedName>
    <alternativeName>
        <fullName evidence="1">Polynucleotide phosphorylase</fullName>
        <shortName evidence="1">PNPase</shortName>
    </alternativeName>
</protein>
<proteinExistence type="inferred from homology"/>